<proteinExistence type="inferred from homology"/>
<accession>C1CA89</accession>
<evidence type="ECO:0000255" key="1">
    <source>
        <dbReference type="HAMAP-Rule" id="MF_00020"/>
    </source>
</evidence>
<sequence length="396" mass="43383">MTKTIAINAGSSSLKWQLYLMPEEKVLAKGLIERIGLKDSISTVKFDGRSEQQILDIENHTQAVKILLDDLIRFDIIKAYDEITGVGHRVVAGGEYFKESTVVEGDVLEKVEELSLLAPLHNPANAAGVRAFKELLPDITSVVVFDTSFHTSMPEKAYRYPLPTKYYTENKVRKYGAHGTSHQFVAGEAAKLLGRPLEDLKLITCHIGNGGSITAVKAGKSVDTSMGFTPLGGIMMGTRTGDIDPAIIPYLMQYTEDFNTPEDISRVLNRESGLLGVSANSSDMRDIEAAVAEGNHEASLAYEMYVDRIQKYIGQYLAVLNGADAIVFTAGVGENAENFRRDVISGISWFGCDVDDEKNVFGVTGDISTEAAKIRVLVIPTDEELVIARDVERLKK</sequence>
<organism>
    <name type="scientific">Streptococcus pneumoniae (strain 70585)</name>
    <dbReference type="NCBI Taxonomy" id="488221"/>
    <lineage>
        <taxon>Bacteria</taxon>
        <taxon>Bacillati</taxon>
        <taxon>Bacillota</taxon>
        <taxon>Bacilli</taxon>
        <taxon>Lactobacillales</taxon>
        <taxon>Streptococcaceae</taxon>
        <taxon>Streptococcus</taxon>
    </lineage>
</organism>
<comment type="function">
    <text evidence="1">Catalyzes the formation of acetyl phosphate from acetate and ATP. Can also catalyze the reverse reaction.</text>
</comment>
<comment type="catalytic activity">
    <reaction evidence="1">
        <text>acetate + ATP = acetyl phosphate + ADP</text>
        <dbReference type="Rhea" id="RHEA:11352"/>
        <dbReference type="ChEBI" id="CHEBI:22191"/>
        <dbReference type="ChEBI" id="CHEBI:30089"/>
        <dbReference type="ChEBI" id="CHEBI:30616"/>
        <dbReference type="ChEBI" id="CHEBI:456216"/>
        <dbReference type="EC" id="2.7.2.1"/>
    </reaction>
</comment>
<comment type="cofactor">
    <cofactor evidence="1">
        <name>Mg(2+)</name>
        <dbReference type="ChEBI" id="CHEBI:18420"/>
    </cofactor>
    <cofactor evidence="1">
        <name>Mn(2+)</name>
        <dbReference type="ChEBI" id="CHEBI:29035"/>
    </cofactor>
    <text evidence="1">Mg(2+). Can also accept Mn(2+).</text>
</comment>
<comment type="pathway">
    <text evidence="1">Metabolic intermediate biosynthesis; acetyl-CoA biosynthesis; acetyl-CoA from acetate: step 1/2.</text>
</comment>
<comment type="subunit">
    <text evidence="1">Homodimer.</text>
</comment>
<comment type="subcellular location">
    <subcellularLocation>
        <location evidence="1">Cytoplasm</location>
    </subcellularLocation>
</comment>
<comment type="similarity">
    <text evidence="1">Belongs to the acetokinase family.</text>
</comment>
<keyword id="KW-0067">ATP-binding</keyword>
<keyword id="KW-0963">Cytoplasm</keyword>
<keyword id="KW-0418">Kinase</keyword>
<keyword id="KW-0460">Magnesium</keyword>
<keyword id="KW-0479">Metal-binding</keyword>
<keyword id="KW-0547">Nucleotide-binding</keyword>
<keyword id="KW-0808">Transferase</keyword>
<protein>
    <recommendedName>
        <fullName evidence="1">Acetate kinase</fullName>
        <ecNumber evidence="1">2.7.2.1</ecNumber>
    </recommendedName>
    <alternativeName>
        <fullName evidence="1">Acetokinase</fullName>
    </alternativeName>
</protein>
<gene>
    <name evidence="1" type="primary">ackA</name>
    <name type="ordered locus">SP70585_2130</name>
</gene>
<feature type="chain" id="PRO_1000116810" description="Acetate kinase">
    <location>
        <begin position="1"/>
        <end position="396"/>
    </location>
</feature>
<feature type="active site" description="Proton donor/acceptor" evidence="1">
    <location>
        <position position="146"/>
    </location>
</feature>
<feature type="binding site" evidence="1">
    <location>
        <position position="8"/>
    </location>
    <ligand>
        <name>Mg(2+)</name>
        <dbReference type="ChEBI" id="CHEBI:18420"/>
    </ligand>
</feature>
<feature type="binding site" evidence="1">
    <location>
        <position position="15"/>
    </location>
    <ligand>
        <name>ATP</name>
        <dbReference type="ChEBI" id="CHEBI:30616"/>
    </ligand>
</feature>
<feature type="binding site" evidence="1">
    <location>
        <position position="89"/>
    </location>
    <ligand>
        <name>substrate</name>
    </ligand>
</feature>
<feature type="binding site" evidence="1">
    <location>
        <begin position="206"/>
        <end position="210"/>
    </location>
    <ligand>
        <name>ATP</name>
        <dbReference type="ChEBI" id="CHEBI:30616"/>
    </ligand>
</feature>
<feature type="binding site" evidence="1">
    <location>
        <begin position="283"/>
        <end position="285"/>
    </location>
    <ligand>
        <name>ATP</name>
        <dbReference type="ChEBI" id="CHEBI:30616"/>
    </ligand>
</feature>
<feature type="binding site" evidence="1">
    <location>
        <begin position="331"/>
        <end position="335"/>
    </location>
    <ligand>
        <name>ATP</name>
        <dbReference type="ChEBI" id="CHEBI:30616"/>
    </ligand>
</feature>
<feature type="binding site" evidence="1">
    <location>
        <position position="383"/>
    </location>
    <ligand>
        <name>Mg(2+)</name>
        <dbReference type="ChEBI" id="CHEBI:18420"/>
    </ligand>
</feature>
<feature type="site" description="Transition state stabilizer" evidence="1">
    <location>
        <position position="178"/>
    </location>
</feature>
<feature type="site" description="Transition state stabilizer" evidence="1">
    <location>
        <position position="239"/>
    </location>
</feature>
<reference key="1">
    <citation type="journal article" date="2010" name="Genome Biol.">
        <title>Structure and dynamics of the pan-genome of Streptococcus pneumoniae and closely related species.</title>
        <authorList>
            <person name="Donati C."/>
            <person name="Hiller N.L."/>
            <person name="Tettelin H."/>
            <person name="Muzzi A."/>
            <person name="Croucher N.J."/>
            <person name="Angiuoli S.V."/>
            <person name="Oggioni M."/>
            <person name="Dunning Hotopp J.C."/>
            <person name="Hu F.Z."/>
            <person name="Riley D.R."/>
            <person name="Covacci A."/>
            <person name="Mitchell T.J."/>
            <person name="Bentley S.D."/>
            <person name="Kilian M."/>
            <person name="Ehrlich G.D."/>
            <person name="Rappuoli R."/>
            <person name="Moxon E.R."/>
            <person name="Masignani V."/>
        </authorList>
    </citation>
    <scope>NUCLEOTIDE SEQUENCE [LARGE SCALE GENOMIC DNA]</scope>
    <source>
        <strain>70585</strain>
    </source>
</reference>
<dbReference type="EC" id="2.7.2.1" evidence="1"/>
<dbReference type="EMBL" id="CP000918">
    <property type="protein sequence ID" value="ACO17823.1"/>
    <property type="molecule type" value="Genomic_DNA"/>
</dbReference>
<dbReference type="RefSeq" id="WP_000167770.1">
    <property type="nucleotide sequence ID" value="NC_012468.1"/>
</dbReference>
<dbReference type="SMR" id="C1CA89"/>
<dbReference type="KEGG" id="snm:SP70585_2130"/>
<dbReference type="HOGENOM" id="CLU_020352_0_1_9"/>
<dbReference type="UniPathway" id="UPA00340">
    <property type="reaction ID" value="UER00458"/>
</dbReference>
<dbReference type="Proteomes" id="UP000002211">
    <property type="component" value="Chromosome"/>
</dbReference>
<dbReference type="GO" id="GO:0005737">
    <property type="term" value="C:cytoplasm"/>
    <property type="evidence" value="ECO:0007669"/>
    <property type="project" value="UniProtKB-SubCell"/>
</dbReference>
<dbReference type="GO" id="GO:0008776">
    <property type="term" value="F:acetate kinase activity"/>
    <property type="evidence" value="ECO:0007669"/>
    <property type="project" value="UniProtKB-UniRule"/>
</dbReference>
<dbReference type="GO" id="GO:0005524">
    <property type="term" value="F:ATP binding"/>
    <property type="evidence" value="ECO:0007669"/>
    <property type="project" value="UniProtKB-KW"/>
</dbReference>
<dbReference type="GO" id="GO:0000287">
    <property type="term" value="F:magnesium ion binding"/>
    <property type="evidence" value="ECO:0007669"/>
    <property type="project" value="UniProtKB-UniRule"/>
</dbReference>
<dbReference type="GO" id="GO:0006083">
    <property type="term" value="P:acetate metabolic process"/>
    <property type="evidence" value="ECO:0007669"/>
    <property type="project" value="TreeGrafter"/>
</dbReference>
<dbReference type="GO" id="GO:0006085">
    <property type="term" value="P:acetyl-CoA biosynthetic process"/>
    <property type="evidence" value="ECO:0007669"/>
    <property type="project" value="UniProtKB-UniRule"/>
</dbReference>
<dbReference type="CDD" id="cd24010">
    <property type="entry name" value="ASKHA_NBD_AcK_PK"/>
    <property type="match status" value="1"/>
</dbReference>
<dbReference type="Gene3D" id="3.30.420.40">
    <property type="match status" value="2"/>
</dbReference>
<dbReference type="HAMAP" id="MF_00020">
    <property type="entry name" value="Acetate_kinase"/>
    <property type="match status" value="1"/>
</dbReference>
<dbReference type="InterPro" id="IPR004372">
    <property type="entry name" value="Ac/propionate_kinase"/>
</dbReference>
<dbReference type="InterPro" id="IPR000890">
    <property type="entry name" value="Aliphatic_acid_kin_short-chain"/>
</dbReference>
<dbReference type="InterPro" id="IPR023865">
    <property type="entry name" value="Aliphatic_acid_kinase_CS"/>
</dbReference>
<dbReference type="InterPro" id="IPR043129">
    <property type="entry name" value="ATPase_NBD"/>
</dbReference>
<dbReference type="NCBIfam" id="TIGR00016">
    <property type="entry name" value="ackA"/>
    <property type="match status" value="1"/>
</dbReference>
<dbReference type="PANTHER" id="PTHR21060">
    <property type="entry name" value="ACETATE KINASE"/>
    <property type="match status" value="1"/>
</dbReference>
<dbReference type="PANTHER" id="PTHR21060:SF15">
    <property type="entry name" value="ACETATE KINASE-RELATED"/>
    <property type="match status" value="1"/>
</dbReference>
<dbReference type="Pfam" id="PF00871">
    <property type="entry name" value="Acetate_kinase"/>
    <property type="match status" value="1"/>
</dbReference>
<dbReference type="PIRSF" id="PIRSF000722">
    <property type="entry name" value="Acetate_prop_kin"/>
    <property type="match status" value="1"/>
</dbReference>
<dbReference type="PRINTS" id="PR00471">
    <property type="entry name" value="ACETATEKNASE"/>
</dbReference>
<dbReference type="SUPFAM" id="SSF53067">
    <property type="entry name" value="Actin-like ATPase domain"/>
    <property type="match status" value="2"/>
</dbReference>
<dbReference type="PROSITE" id="PS01075">
    <property type="entry name" value="ACETATE_KINASE_1"/>
    <property type="match status" value="1"/>
</dbReference>
<dbReference type="PROSITE" id="PS01076">
    <property type="entry name" value="ACETATE_KINASE_2"/>
    <property type="match status" value="1"/>
</dbReference>
<name>ACKA_STRP7</name>